<gene>
    <name type="primary">PCMP-H18</name>
    <name type="ordered locus">At1g09410</name>
    <name type="ORF">F14J9.7</name>
</gene>
<protein>
    <recommendedName>
        <fullName>Pentatricopeptide repeat-containing protein At1g09410, mitochondrial</fullName>
    </recommendedName>
</protein>
<proteinExistence type="evidence at protein level"/>
<comment type="subcellular location">
    <subcellularLocation>
        <location evidence="4">Mitochondrion</location>
    </subcellularLocation>
</comment>
<comment type="alternative products">
    <event type="alternative splicing"/>
    <isoform>
        <id>Q56XI1-1</id>
        <name>1</name>
        <sequence type="displayed"/>
    </isoform>
    <isoform>
        <id>Q56XI1-2</id>
        <name>2</name>
        <sequence type="described" ref="VSP_034545 VSP_034546"/>
    </isoform>
</comment>
<comment type="similarity">
    <text evidence="3">Belongs to the PPR family. PCMP-H subfamily.</text>
</comment>
<comment type="online information" name="Pentatricopeptide repeat proteins">
    <link uri="https://ppr.plantenergy.uwa.edu.au"/>
</comment>
<keyword id="KW-0025">Alternative splicing</keyword>
<keyword id="KW-0496">Mitochondrion</keyword>
<keyword id="KW-1185">Reference proteome</keyword>
<keyword id="KW-0677">Repeat</keyword>
<keyword id="KW-0809">Transit peptide</keyword>
<name>PPR25_ARATH</name>
<feature type="transit peptide" description="Mitochondrion" evidence="1">
    <location>
        <begin position="1"/>
        <end position="11"/>
    </location>
</feature>
<feature type="chain" id="PRO_0000342766" description="Pentatricopeptide repeat-containing protein At1g09410, mitochondrial">
    <location>
        <begin position="12"/>
        <end position="705"/>
    </location>
</feature>
<feature type="repeat" description="PPR 1">
    <location>
        <begin position="16"/>
        <end position="46"/>
    </location>
</feature>
<feature type="repeat" description="PPR 2">
    <location>
        <begin position="47"/>
        <end position="77"/>
    </location>
</feature>
<feature type="repeat" description="PPR 3">
    <location>
        <begin position="78"/>
        <end position="112"/>
    </location>
</feature>
<feature type="repeat" description="PPR 4">
    <location>
        <begin position="113"/>
        <end position="139"/>
    </location>
</feature>
<feature type="repeat" description="PPR 5">
    <location>
        <begin position="140"/>
        <end position="170"/>
    </location>
</feature>
<feature type="repeat" description="PPR 6">
    <location>
        <begin position="171"/>
        <end position="205"/>
    </location>
</feature>
<feature type="repeat" description="PPR 7">
    <location>
        <begin position="206"/>
        <end position="232"/>
    </location>
</feature>
<feature type="repeat" description="PPR 8">
    <location>
        <begin position="233"/>
        <end position="267"/>
    </location>
</feature>
<feature type="repeat" description="PPR 9">
    <location>
        <begin position="268"/>
        <end position="294"/>
    </location>
</feature>
<feature type="repeat" description="PPR 10">
    <location>
        <begin position="295"/>
        <end position="329"/>
    </location>
</feature>
<feature type="repeat" description="PPR 11">
    <location>
        <begin position="330"/>
        <end position="364"/>
    </location>
</feature>
<feature type="repeat" description="PPR 12">
    <location>
        <begin position="365"/>
        <end position="395"/>
    </location>
</feature>
<feature type="repeat" description="PPR 13">
    <location>
        <begin position="396"/>
        <end position="430"/>
    </location>
</feature>
<feature type="repeat" description="PPR 14">
    <location>
        <begin position="432"/>
        <end position="462"/>
    </location>
</feature>
<feature type="repeat" description="PPR 15">
    <location>
        <begin position="468"/>
        <end position="498"/>
    </location>
</feature>
<feature type="region of interest" description="Type E motif">
    <location>
        <begin position="503"/>
        <end position="578"/>
    </location>
</feature>
<feature type="region of interest" description="Type E(+) motif">
    <location>
        <begin position="579"/>
        <end position="610"/>
    </location>
</feature>
<feature type="region of interest" description="Type DYW motif">
    <location>
        <begin position="611"/>
        <end position="705"/>
    </location>
</feature>
<feature type="splice variant" id="VSP_034545" description="In isoform 2." evidence="2">
    <original>KQVHAQLVRCQFDVDVYVASVLMTM</original>
    <variation>FLQRTLSCGIQSYLVMPHTVLERKH</variation>
    <location>
        <begin position="351"/>
        <end position="375"/>
    </location>
</feature>
<feature type="splice variant" id="VSP_034546" description="In isoform 2." evidence="2">
    <location>
        <begin position="376"/>
        <end position="705"/>
    </location>
</feature>
<evidence type="ECO:0000269" key="1">
    <source>
    </source>
</evidence>
<evidence type="ECO:0000303" key="2">
    <source ref="4"/>
</evidence>
<evidence type="ECO:0000305" key="3"/>
<evidence type="ECO:0000305" key="4">
    <source>
    </source>
</evidence>
<sequence length="705" mass="79794">MKSQILLRRTYSTTIPPPTANVRITHLSRIGKIHEARKLFDSCDSKSISSWNSMVAGYFANLMPRDARKLFDEMPDRNIISWNGLVSGYMKNGEIDEARKVFDLMPERNVVSWTALVKGYVHNGKVDVAESLFWKMPEKNKVSWTVMLIGFLQDGRIDDACKLYEMIPDKDNIARTSMIHGLCKEGRVDEAREIFDEMSERSVITWTTMVTGYGQNNRVDDARKIFDVMPEKTEVSWTSMLMGYVQNGRIEDAEELFEVMPVKPVIACNAMISGLGQKGEIAKARRVFDSMKERNDASWQTVIKIHERNGFELEALDLFILMQKQGVRPTFPTLISILSVCASLASLHHGKQVHAQLVRCQFDVDVYVASVLMTMYIKCGELVKSKLIFDRFPSKDIIMWNSIISGYASHGLGEEALKVFCEMPLSGSTKPNEVTFVATLSACSYAGMVEEGLKIYESMESVFGVKPITAHYACMVDMLGRAGRFNEAMEMIDSMTVEPDAAVWGSLLGACRTHSQLDVAEFCAKKLIEIEPENSGTYILLSNMYASQGRWADVAELRKLMKTRLVRKSPGCSWTEVENKVHAFTRGGINSHPEQESILKILDELDGLLREAGYNPDCSYALHDVDEEEKVNSLKYHSERLAVAYALLKLSEGIPIRVMKNLRVCSDCHTAIKIISKVKEREIILRDANRFHHFRNGECSCKDYW</sequence>
<accession>Q56XI1</accession>
<accession>O80524</accession>
<organism>
    <name type="scientific">Arabidopsis thaliana</name>
    <name type="common">Mouse-ear cress</name>
    <dbReference type="NCBI Taxonomy" id="3702"/>
    <lineage>
        <taxon>Eukaryota</taxon>
        <taxon>Viridiplantae</taxon>
        <taxon>Streptophyta</taxon>
        <taxon>Embryophyta</taxon>
        <taxon>Tracheophyta</taxon>
        <taxon>Spermatophyta</taxon>
        <taxon>Magnoliopsida</taxon>
        <taxon>eudicotyledons</taxon>
        <taxon>Gunneridae</taxon>
        <taxon>Pentapetalae</taxon>
        <taxon>rosids</taxon>
        <taxon>malvids</taxon>
        <taxon>Brassicales</taxon>
        <taxon>Brassicaceae</taxon>
        <taxon>Camelineae</taxon>
        <taxon>Arabidopsis</taxon>
    </lineage>
</organism>
<dbReference type="EMBL" id="AC003970">
    <property type="protein sequence ID" value="AAC33201.1"/>
    <property type="molecule type" value="Genomic_DNA"/>
</dbReference>
<dbReference type="EMBL" id="CP002684">
    <property type="protein sequence ID" value="AEE28438.1"/>
    <property type="molecule type" value="Genomic_DNA"/>
</dbReference>
<dbReference type="EMBL" id="DQ446238">
    <property type="protein sequence ID" value="ABE65608.1"/>
    <property type="molecule type" value="mRNA"/>
</dbReference>
<dbReference type="EMBL" id="AK221693">
    <property type="protein sequence ID" value="BAD95400.1"/>
    <property type="molecule type" value="mRNA"/>
</dbReference>
<dbReference type="PIR" id="D86227">
    <property type="entry name" value="D86227"/>
</dbReference>
<dbReference type="RefSeq" id="NP_172412.1">
    <molecule id="Q56XI1-1"/>
    <property type="nucleotide sequence ID" value="NM_100811.2"/>
</dbReference>
<dbReference type="SMR" id="Q56XI1"/>
<dbReference type="FunCoup" id="Q56XI1">
    <property type="interactions" value="186"/>
</dbReference>
<dbReference type="iPTMnet" id="Q56XI1"/>
<dbReference type="PaxDb" id="3702-AT1G09410.1"/>
<dbReference type="ProteomicsDB" id="234697">
    <molecule id="Q56XI1-1"/>
</dbReference>
<dbReference type="EnsemblPlants" id="AT1G09410.1">
    <molecule id="Q56XI1-1"/>
    <property type="protein sequence ID" value="AT1G09410.1"/>
    <property type="gene ID" value="AT1G09410"/>
</dbReference>
<dbReference type="GeneID" id="837463"/>
<dbReference type="Gramene" id="AT1G09410.1">
    <molecule id="Q56XI1-1"/>
    <property type="protein sequence ID" value="AT1G09410.1"/>
    <property type="gene ID" value="AT1G09410"/>
</dbReference>
<dbReference type="KEGG" id="ath:AT1G09410"/>
<dbReference type="Araport" id="AT1G09410"/>
<dbReference type="TAIR" id="AT1G09410"/>
<dbReference type="eggNOG" id="KOG4197">
    <property type="taxonomic scope" value="Eukaryota"/>
</dbReference>
<dbReference type="HOGENOM" id="CLU_002706_15_5_1"/>
<dbReference type="InParanoid" id="Q56XI1"/>
<dbReference type="OMA" id="ACRTHSQ"/>
<dbReference type="PhylomeDB" id="Q56XI1"/>
<dbReference type="PRO" id="PR:Q56XI1"/>
<dbReference type="Proteomes" id="UP000006548">
    <property type="component" value="Chromosome 1"/>
</dbReference>
<dbReference type="ExpressionAtlas" id="Q56XI1">
    <property type="expression patterns" value="baseline and differential"/>
</dbReference>
<dbReference type="GO" id="GO:0005739">
    <property type="term" value="C:mitochondrion"/>
    <property type="evidence" value="ECO:0007669"/>
    <property type="project" value="UniProtKB-SubCell"/>
</dbReference>
<dbReference type="GO" id="GO:0003723">
    <property type="term" value="F:RNA binding"/>
    <property type="evidence" value="ECO:0007669"/>
    <property type="project" value="InterPro"/>
</dbReference>
<dbReference type="GO" id="GO:0008270">
    <property type="term" value="F:zinc ion binding"/>
    <property type="evidence" value="ECO:0007669"/>
    <property type="project" value="InterPro"/>
</dbReference>
<dbReference type="GO" id="GO:0009451">
    <property type="term" value="P:RNA modification"/>
    <property type="evidence" value="ECO:0007669"/>
    <property type="project" value="InterPro"/>
</dbReference>
<dbReference type="FunFam" id="1.25.40.10:FF:000366">
    <property type="entry name" value="Pentatricopeptide (PPR) repeat-containing protein"/>
    <property type="match status" value="1"/>
</dbReference>
<dbReference type="FunFam" id="1.25.40.10:FF:000125">
    <property type="entry name" value="Pentatricopeptide repeat-containing protein"/>
    <property type="match status" value="1"/>
</dbReference>
<dbReference type="FunFam" id="1.25.40.10:FF:002421">
    <property type="entry name" value="Pentatricopeptide repeat-containing protein At1g09410, mitochondrial"/>
    <property type="match status" value="1"/>
</dbReference>
<dbReference type="FunFam" id="1.25.40.10:FF:002424">
    <property type="entry name" value="Pentatricopeptide repeat-containing protein At1g09410, mitochondrial"/>
    <property type="match status" value="1"/>
</dbReference>
<dbReference type="Gene3D" id="1.25.40.10">
    <property type="entry name" value="Tetratricopeptide repeat domain"/>
    <property type="match status" value="5"/>
</dbReference>
<dbReference type="InterPro" id="IPR032867">
    <property type="entry name" value="DYW_dom"/>
</dbReference>
<dbReference type="InterPro" id="IPR046848">
    <property type="entry name" value="E_motif"/>
</dbReference>
<dbReference type="InterPro" id="IPR002885">
    <property type="entry name" value="Pentatricopeptide_rpt"/>
</dbReference>
<dbReference type="InterPro" id="IPR046960">
    <property type="entry name" value="PPR_At4g14850-like_plant"/>
</dbReference>
<dbReference type="InterPro" id="IPR011990">
    <property type="entry name" value="TPR-like_helical_dom_sf"/>
</dbReference>
<dbReference type="NCBIfam" id="TIGR00756">
    <property type="entry name" value="PPR"/>
    <property type="match status" value="9"/>
</dbReference>
<dbReference type="PANTHER" id="PTHR47926:SF478">
    <property type="entry name" value="PENTACOTRIPEPTIDE-REPEAT REGION OF PRORP DOMAIN-CONTAINING PROTEIN"/>
    <property type="match status" value="1"/>
</dbReference>
<dbReference type="PANTHER" id="PTHR47926">
    <property type="entry name" value="PENTATRICOPEPTIDE REPEAT-CONTAINING PROTEIN"/>
    <property type="match status" value="1"/>
</dbReference>
<dbReference type="Pfam" id="PF14432">
    <property type="entry name" value="DYW_deaminase"/>
    <property type="match status" value="1"/>
</dbReference>
<dbReference type="Pfam" id="PF20431">
    <property type="entry name" value="E_motif"/>
    <property type="match status" value="1"/>
</dbReference>
<dbReference type="Pfam" id="PF01535">
    <property type="entry name" value="PPR"/>
    <property type="match status" value="8"/>
</dbReference>
<dbReference type="Pfam" id="PF12854">
    <property type="entry name" value="PPR_1"/>
    <property type="match status" value="2"/>
</dbReference>
<dbReference type="Pfam" id="PF13041">
    <property type="entry name" value="PPR_2"/>
    <property type="match status" value="1"/>
</dbReference>
<dbReference type="SUPFAM" id="SSF48452">
    <property type="entry name" value="TPR-like"/>
    <property type="match status" value="1"/>
</dbReference>
<dbReference type="PROSITE" id="PS51375">
    <property type="entry name" value="PPR"/>
    <property type="match status" value="15"/>
</dbReference>
<reference key="1">
    <citation type="journal article" date="2000" name="Nature">
        <title>Sequence and analysis of chromosome 1 of the plant Arabidopsis thaliana.</title>
        <authorList>
            <person name="Theologis A."/>
            <person name="Ecker J.R."/>
            <person name="Palm C.J."/>
            <person name="Federspiel N.A."/>
            <person name="Kaul S."/>
            <person name="White O."/>
            <person name="Alonso J."/>
            <person name="Altafi H."/>
            <person name="Araujo R."/>
            <person name="Bowman C.L."/>
            <person name="Brooks S.Y."/>
            <person name="Buehler E."/>
            <person name="Chan A."/>
            <person name="Chao Q."/>
            <person name="Chen H."/>
            <person name="Cheuk R.F."/>
            <person name="Chin C.W."/>
            <person name="Chung M.K."/>
            <person name="Conn L."/>
            <person name="Conway A.B."/>
            <person name="Conway A.R."/>
            <person name="Creasy T.H."/>
            <person name="Dewar K."/>
            <person name="Dunn P."/>
            <person name="Etgu P."/>
            <person name="Feldblyum T.V."/>
            <person name="Feng J.-D."/>
            <person name="Fong B."/>
            <person name="Fujii C.Y."/>
            <person name="Gill J.E."/>
            <person name="Goldsmith A.D."/>
            <person name="Haas B."/>
            <person name="Hansen N.F."/>
            <person name="Hughes B."/>
            <person name="Huizar L."/>
            <person name="Hunter J.L."/>
            <person name="Jenkins J."/>
            <person name="Johnson-Hopson C."/>
            <person name="Khan S."/>
            <person name="Khaykin E."/>
            <person name="Kim C.J."/>
            <person name="Koo H.L."/>
            <person name="Kremenetskaia I."/>
            <person name="Kurtz D.B."/>
            <person name="Kwan A."/>
            <person name="Lam B."/>
            <person name="Langin-Hooper S."/>
            <person name="Lee A."/>
            <person name="Lee J.M."/>
            <person name="Lenz C.A."/>
            <person name="Li J.H."/>
            <person name="Li Y.-P."/>
            <person name="Lin X."/>
            <person name="Liu S.X."/>
            <person name="Liu Z.A."/>
            <person name="Luros J.S."/>
            <person name="Maiti R."/>
            <person name="Marziali A."/>
            <person name="Militscher J."/>
            <person name="Miranda M."/>
            <person name="Nguyen M."/>
            <person name="Nierman W.C."/>
            <person name="Osborne B.I."/>
            <person name="Pai G."/>
            <person name="Peterson J."/>
            <person name="Pham P.K."/>
            <person name="Rizzo M."/>
            <person name="Rooney T."/>
            <person name="Rowley D."/>
            <person name="Sakano H."/>
            <person name="Salzberg S.L."/>
            <person name="Schwartz J.R."/>
            <person name="Shinn P."/>
            <person name="Southwick A.M."/>
            <person name="Sun H."/>
            <person name="Tallon L.J."/>
            <person name="Tambunga G."/>
            <person name="Toriumi M.J."/>
            <person name="Town C.D."/>
            <person name="Utterback T."/>
            <person name="Van Aken S."/>
            <person name="Vaysberg M."/>
            <person name="Vysotskaia V.S."/>
            <person name="Walker M."/>
            <person name="Wu D."/>
            <person name="Yu G."/>
            <person name="Fraser C.M."/>
            <person name="Venter J.C."/>
            <person name="Davis R.W."/>
        </authorList>
    </citation>
    <scope>NUCLEOTIDE SEQUENCE [LARGE SCALE GENOMIC DNA]</scope>
    <source>
        <strain>cv. Columbia</strain>
    </source>
</reference>
<reference key="2">
    <citation type="journal article" date="2017" name="Plant J.">
        <title>Araport11: a complete reannotation of the Arabidopsis thaliana reference genome.</title>
        <authorList>
            <person name="Cheng C.Y."/>
            <person name="Krishnakumar V."/>
            <person name="Chan A.P."/>
            <person name="Thibaud-Nissen F."/>
            <person name="Schobel S."/>
            <person name="Town C.D."/>
        </authorList>
    </citation>
    <scope>GENOME REANNOTATION</scope>
    <source>
        <strain>cv. Columbia</strain>
    </source>
</reference>
<reference key="3">
    <citation type="journal article" date="2006" name="Plant Biotechnol. J.">
        <title>Simultaneous high-throughput recombinational cloning of open reading frames in closed and open configurations.</title>
        <authorList>
            <person name="Underwood B.A."/>
            <person name="Vanderhaeghen R."/>
            <person name="Whitford R."/>
            <person name="Town C.D."/>
            <person name="Hilson P."/>
        </authorList>
    </citation>
    <scope>NUCLEOTIDE SEQUENCE [LARGE SCALE MRNA] (ISOFORM 1)</scope>
    <source>
        <strain>cv. Columbia</strain>
    </source>
</reference>
<reference key="4">
    <citation type="submission" date="2005-03" db="EMBL/GenBank/DDBJ databases">
        <title>Large-scale analysis of RIKEN Arabidopsis full-length (RAFL) cDNAs.</title>
        <authorList>
            <person name="Totoki Y."/>
            <person name="Seki M."/>
            <person name="Ishida J."/>
            <person name="Nakajima M."/>
            <person name="Enju A."/>
            <person name="Kamiya A."/>
            <person name="Narusaka M."/>
            <person name="Shin-i T."/>
            <person name="Nakagawa M."/>
            <person name="Sakamoto N."/>
            <person name="Oishi K."/>
            <person name="Kohara Y."/>
            <person name="Kobayashi M."/>
            <person name="Toyoda A."/>
            <person name="Sakaki Y."/>
            <person name="Sakurai T."/>
            <person name="Iida K."/>
            <person name="Akiyama K."/>
            <person name="Satou M."/>
            <person name="Toyoda T."/>
            <person name="Konagaya A."/>
            <person name="Carninci P."/>
            <person name="Kawai J."/>
            <person name="Hayashizaki Y."/>
            <person name="Shinozaki K."/>
        </authorList>
    </citation>
    <scope>NUCLEOTIDE SEQUENCE [LARGE SCALE MRNA] (ISOFORM 2)</scope>
    <source>
        <strain>cv. Columbia</strain>
    </source>
</reference>
<reference key="5">
    <citation type="journal article" date="2000" name="Plant Mol. Biol.">
        <title>In Arabidopsis thaliana, 1% of the genome codes for a novel protein family unique to plants.</title>
        <authorList>
            <person name="Aubourg S."/>
            <person name="Boudet N."/>
            <person name="Kreis M."/>
            <person name="Lecharny A."/>
        </authorList>
    </citation>
    <scope>GENE FAMILY</scope>
</reference>
<reference key="6">
    <citation type="journal article" date="2004" name="Plant Cell">
        <title>Genome-wide analysis of Arabidopsis pentatricopeptide repeat proteins reveals their essential role in organelle biogenesis.</title>
        <authorList>
            <person name="Lurin C."/>
            <person name="Andres C."/>
            <person name="Aubourg S."/>
            <person name="Bellaoui M."/>
            <person name="Bitton F."/>
            <person name="Bruyere C."/>
            <person name="Caboche M."/>
            <person name="Debast C."/>
            <person name="Gualberto J."/>
            <person name="Hoffmann B."/>
            <person name="Lecharny A."/>
            <person name="Le Ret M."/>
            <person name="Martin-Magniette M.-L."/>
            <person name="Mireau H."/>
            <person name="Peeters N."/>
            <person name="Renou J.-P."/>
            <person name="Szurek B."/>
            <person name="Taconnat L."/>
            <person name="Small I."/>
        </authorList>
    </citation>
    <scope>GENE FAMILY</scope>
</reference>
<reference key="7">
    <citation type="journal article" date="2015" name="J. Exp. Bot.">
        <title>Identification of cleavage sites and substrate proteins for two mitochondrial intermediate peptidases in Arabidopsis thaliana.</title>
        <authorList>
            <person name="Carrie C."/>
            <person name="Venne A.S."/>
            <person name="Zahedi R.P."/>
            <person name="Soll J."/>
        </authorList>
    </citation>
    <scope>IDENTIFICATION BY MASS SPECTROMETRY</scope>
    <scope>CLEAVAGE OF TRANSIT PEPTIDE AFTER TYR-11</scope>
</reference>